<gene>
    <name evidence="1" type="primary">hslU</name>
    <name type="ordered locus">Caul_5052</name>
</gene>
<keyword id="KW-0067">ATP-binding</keyword>
<keyword id="KW-0143">Chaperone</keyword>
<keyword id="KW-0963">Cytoplasm</keyword>
<keyword id="KW-0547">Nucleotide-binding</keyword>
<keyword id="KW-0346">Stress response</keyword>
<protein>
    <recommendedName>
        <fullName evidence="1">ATP-dependent protease ATPase subunit HslU</fullName>
    </recommendedName>
    <alternativeName>
        <fullName evidence="1">Unfoldase HslU</fullName>
    </alternativeName>
</protein>
<name>HSLU_CAUSK</name>
<dbReference type="EMBL" id="CP000927">
    <property type="protein sequence ID" value="ABZ74172.1"/>
    <property type="molecule type" value="Genomic_DNA"/>
</dbReference>
<dbReference type="SMR" id="B0T7A8"/>
<dbReference type="STRING" id="366602.Caul_5052"/>
<dbReference type="KEGG" id="cak:Caul_5052"/>
<dbReference type="eggNOG" id="COG1220">
    <property type="taxonomic scope" value="Bacteria"/>
</dbReference>
<dbReference type="HOGENOM" id="CLU_033123_0_0_5"/>
<dbReference type="OrthoDB" id="9804062at2"/>
<dbReference type="GO" id="GO:0009376">
    <property type="term" value="C:HslUV protease complex"/>
    <property type="evidence" value="ECO:0007669"/>
    <property type="project" value="UniProtKB-UniRule"/>
</dbReference>
<dbReference type="GO" id="GO:0005524">
    <property type="term" value="F:ATP binding"/>
    <property type="evidence" value="ECO:0007669"/>
    <property type="project" value="UniProtKB-UniRule"/>
</dbReference>
<dbReference type="GO" id="GO:0016887">
    <property type="term" value="F:ATP hydrolysis activity"/>
    <property type="evidence" value="ECO:0007669"/>
    <property type="project" value="InterPro"/>
</dbReference>
<dbReference type="GO" id="GO:0008233">
    <property type="term" value="F:peptidase activity"/>
    <property type="evidence" value="ECO:0007669"/>
    <property type="project" value="InterPro"/>
</dbReference>
<dbReference type="GO" id="GO:0036402">
    <property type="term" value="F:proteasome-activating activity"/>
    <property type="evidence" value="ECO:0007669"/>
    <property type="project" value="UniProtKB-UniRule"/>
</dbReference>
<dbReference type="GO" id="GO:0043335">
    <property type="term" value="P:protein unfolding"/>
    <property type="evidence" value="ECO:0007669"/>
    <property type="project" value="UniProtKB-UniRule"/>
</dbReference>
<dbReference type="GO" id="GO:0051603">
    <property type="term" value="P:proteolysis involved in protein catabolic process"/>
    <property type="evidence" value="ECO:0007669"/>
    <property type="project" value="TreeGrafter"/>
</dbReference>
<dbReference type="CDD" id="cd19498">
    <property type="entry name" value="RecA-like_HslU"/>
    <property type="match status" value="1"/>
</dbReference>
<dbReference type="FunFam" id="3.40.50.300:FF:000213">
    <property type="entry name" value="ATP-dependent protease ATPase subunit HslU"/>
    <property type="match status" value="1"/>
</dbReference>
<dbReference type="FunFam" id="3.40.50.300:FF:000220">
    <property type="entry name" value="ATP-dependent protease ATPase subunit HslU"/>
    <property type="match status" value="1"/>
</dbReference>
<dbReference type="Gene3D" id="1.10.8.60">
    <property type="match status" value="1"/>
</dbReference>
<dbReference type="Gene3D" id="1.10.8.10">
    <property type="entry name" value="DNA helicase RuvA subunit, C-terminal domain"/>
    <property type="match status" value="1"/>
</dbReference>
<dbReference type="Gene3D" id="3.40.50.300">
    <property type="entry name" value="P-loop containing nucleotide triphosphate hydrolases"/>
    <property type="match status" value="2"/>
</dbReference>
<dbReference type="HAMAP" id="MF_00249">
    <property type="entry name" value="HslU"/>
    <property type="match status" value="1"/>
</dbReference>
<dbReference type="InterPro" id="IPR003593">
    <property type="entry name" value="AAA+_ATPase"/>
</dbReference>
<dbReference type="InterPro" id="IPR050052">
    <property type="entry name" value="ATP-dep_Clp_protease_ClpX"/>
</dbReference>
<dbReference type="InterPro" id="IPR003959">
    <property type="entry name" value="ATPase_AAA_core"/>
</dbReference>
<dbReference type="InterPro" id="IPR019489">
    <property type="entry name" value="Clp_ATPase_C"/>
</dbReference>
<dbReference type="InterPro" id="IPR004491">
    <property type="entry name" value="HslU"/>
</dbReference>
<dbReference type="InterPro" id="IPR027417">
    <property type="entry name" value="P-loop_NTPase"/>
</dbReference>
<dbReference type="NCBIfam" id="TIGR00390">
    <property type="entry name" value="hslU"/>
    <property type="match status" value="1"/>
</dbReference>
<dbReference type="NCBIfam" id="NF003544">
    <property type="entry name" value="PRK05201.1"/>
    <property type="match status" value="1"/>
</dbReference>
<dbReference type="PANTHER" id="PTHR48102">
    <property type="entry name" value="ATP-DEPENDENT CLP PROTEASE ATP-BINDING SUBUNIT CLPX-LIKE, MITOCHONDRIAL-RELATED"/>
    <property type="match status" value="1"/>
</dbReference>
<dbReference type="PANTHER" id="PTHR48102:SF3">
    <property type="entry name" value="ATP-DEPENDENT PROTEASE ATPASE SUBUNIT HSLU"/>
    <property type="match status" value="1"/>
</dbReference>
<dbReference type="Pfam" id="PF00004">
    <property type="entry name" value="AAA"/>
    <property type="match status" value="1"/>
</dbReference>
<dbReference type="Pfam" id="PF07724">
    <property type="entry name" value="AAA_2"/>
    <property type="match status" value="1"/>
</dbReference>
<dbReference type="Pfam" id="PF10431">
    <property type="entry name" value="ClpB_D2-small"/>
    <property type="match status" value="1"/>
</dbReference>
<dbReference type="SMART" id="SM00382">
    <property type="entry name" value="AAA"/>
    <property type="match status" value="1"/>
</dbReference>
<dbReference type="SMART" id="SM01086">
    <property type="entry name" value="ClpB_D2-small"/>
    <property type="match status" value="1"/>
</dbReference>
<dbReference type="SUPFAM" id="SSF52540">
    <property type="entry name" value="P-loop containing nucleoside triphosphate hydrolases"/>
    <property type="match status" value="1"/>
</dbReference>
<sequence length="431" mass="46793">MTEFSPREIVSELDRYIVGHTEAKKAVAVALRNRWRRRRVPADLRDEVTPKNILLIGPTGVGKTEIARRLAKLAQAPFLKVEATKFTEVGYVGRDVDQIVRDLVESALSMVRDKRRGGVKAKAEAAAEERILDALTGPGSTAARESFRKKLRAGELDDKEVELQLADTGGGGMFEIPGQPGASVLNLSEMMKSFGGGRTKTHKTTVVGAWAPLIAEESDKLLDQEALTQEALELAENHGIVFLDEIDKVASSSQRGGADVSREGVQRDLLPLIEGTTVSTKYGPVKTDHILFIASGAFHVAKPSDLLPELQGRLPIRVELKGLTRDDLRRILTEPEANLIRQHQALLLTEGVTLVFTEEAIDAVADAAVAVNASVENIGARRLQTILEKVVEEISFTAADRSGETVTVDADYVQARIGALAANADLSRFIL</sequence>
<proteinExistence type="inferred from homology"/>
<organism>
    <name type="scientific">Caulobacter sp. (strain K31)</name>
    <dbReference type="NCBI Taxonomy" id="366602"/>
    <lineage>
        <taxon>Bacteria</taxon>
        <taxon>Pseudomonadati</taxon>
        <taxon>Pseudomonadota</taxon>
        <taxon>Alphaproteobacteria</taxon>
        <taxon>Caulobacterales</taxon>
        <taxon>Caulobacteraceae</taxon>
        <taxon>Caulobacter</taxon>
    </lineage>
</organism>
<reference key="1">
    <citation type="submission" date="2008-01" db="EMBL/GenBank/DDBJ databases">
        <title>Complete sequence of chromosome of Caulobacter sp. K31.</title>
        <authorList>
            <consortium name="US DOE Joint Genome Institute"/>
            <person name="Copeland A."/>
            <person name="Lucas S."/>
            <person name="Lapidus A."/>
            <person name="Barry K."/>
            <person name="Glavina del Rio T."/>
            <person name="Dalin E."/>
            <person name="Tice H."/>
            <person name="Pitluck S."/>
            <person name="Bruce D."/>
            <person name="Goodwin L."/>
            <person name="Thompson L.S."/>
            <person name="Brettin T."/>
            <person name="Detter J.C."/>
            <person name="Han C."/>
            <person name="Schmutz J."/>
            <person name="Larimer F."/>
            <person name="Land M."/>
            <person name="Hauser L."/>
            <person name="Kyrpides N."/>
            <person name="Kim E."/>
            <person name="Stephens C."/>
            <person name="Richardson P."/>
        </authorList>
    </citation>
    <scope>NUCLEOTIDE SEQUENCE [LARGE SCALE GENOMIC DNA]</scope>
    <source>
        <strain>K31</strain>
    </source>
</reference>
<accession>B0T7A8</accession>
<evidence type="ECO:0000255" key="1">
    <source>
        <dbReference type="HAMAP-Rule" id="MF_00249"/>
    </source>
</evidence>
<comment type="function">
    <text evidence="1">ATPase subunit of a proteasome-like degradation complex; this subunit has chaperone activity. The binding of ATP and its subsequent hydrolysis by HslU are essential for unfolding of protein substrates subsequently hydrolyzed by HslV. HslU recognizes the N-terminal part of its protein substrates and unfolds these before they are guided to HslV for hydrolysis.</text>
</comment>
<comment type="subunit">
    <text evidence="1">A double ring-shaped homohexamer of HslV is capped on each side by a ring-shaped HslU homohexamer. The assembly of the HslU/HslV complex is dependent on binding of ATP.</text>
</comment>
<comment type="subcellular location">
    <subcellularLocation>
        <location evidence="1">Cytoplasm</location>
    </subcellularLocation>
</comment>
<comment type="similarity">
    <text evidence="1">Belongs to the ClpX chaperone family. HslU subfamily.</text>
</comment>
<feature type="chain" id="PRO_1000078441" description="ATP-dependent protease ATPase subunit HslU">
    <location>
        <begin position="1"/>
        <end position="431"/>
    </location>
</feature>
<feature type="binding site" evidence="1">
    <location>
        <position position="18"/>
    </location>
    <ligand>
        <name>ATP</name>
        <dbReference type="ChEBI" id="CHEBI:30616"/>
    </ligand>
</feature>
<feature type="binding site" evidence="1">
    <location>
        <begin position="60"/>
        <end position="65"/>
    </location>
    <ligand>
        <name>ATP</name>
        <dbReference type="ChEBI" id="CHEBI:30616"/>
    </ligand>
</feature>
<feature type="binding site" evidence="1">
    <location>
        <position position="244"/>
    </location>
    <ligand>
        <name>ATP</name>
        <dbReference type="ChEBI" id="CHEBI:30616"/>
    </ligand>
</feature>
<feature type="binding site" evidence="1">
    <location>
        <position position="309"/>
    </location>
    <ligand>
        <name>ATP</name>
        <dbReference type="ChEBI" id="CHEBI:30616"/>
    </ligand>
</feature>
<feature type="binding site" evidence="1">
    <location>
        <position position="381"/>
    </location>
    <ligand>
        <name>ATP</name>
        <dbReference type="ChEBI" id="CHEBI:30616"/>
    </ligand>
</feature>